<organism>
    <name type="scientific">Bacillus cereus (strain B4264)</name>
    <dbReference type="NCBI Taxonomy" id="405532"/>
    <lineage>
        <taxon>Bacteria</taxon>
        <taxon>Bacillati</taxon>
        <taxon>Bacillota</taxon>
        <taxon>Bacilli</taxon>
        <taxon>Bacillales</taxon>
        <taxon>Bacillaceae</taxon>
        <taxon>Bacillus</taxon>
        <taxon>Bacillus cereus group</taxon>
    </lineage>
</organism>
<keyword id="KW-0067">ATP-binding</keyword>
<keyword id="KW-0963">Cytoplasm</keyword>
<keyword id="KW-0418">Kinase</keyword>
<keyword id="KW-0479">Metal-binding</keyword>
<keyword id="KW-0545">Nucleotide biosynthesis</keyword>
<keyword id="KW-0547">Nucleotide-binding</keyword>
<keyword id="KW-0808">Transferase</keyword>
<keyword id="KW-0862">Zinc</keyword>
<proteinExistence type="inferred from homology"/>
<sequence>MNLILMGLPGAGKGTQAEQIVAKYNIPHISTGDMFRAAMKAETEMGLQAKSFIDKGALVPDEVTIGIVRERLSQDDCVRGFLLDGFPRTVAQASALEEIMKDLGKKIDYVLNINVDSGLLLKRLTGRRICKECGATYHLEFNPPAKADVCDKCGGELYQRSDDNEETVANRLDVNIKQTKPLLDFYEELGYLQSINGEQDINKVFADIDVLIGGLA</sequence>
<evidence type="ECO:0000255" key="1">
    <source>
        <dbReference type="HAMAP-Rule" id="MF_00235"/>
    </source>
</evidence>
<dbReference type="EC" id="2.7.4.3" evidence="1"/>
<dbReference type="EMBL" id="CP001176">
    <property type="protein sequence ID" value="ACK58883.1"/>
    <property type="molecule type" value="Genomic_DNA"/>
</dbReference>
<dbReference type="RefSeq" id="WP_001048989.1">
    <property type="nucleotide sequence ID" value="NZ_VEHB01000017.1"/>
</dbReference>
<dbReference type="SMR" id="B7HJ69"/>
<dbReference type="KEGG" id="bcb:BCB4264_A0152"/>
<dbReference type="HOGENOM" id="CLU_032354_1_2_9"/>
<dbReference type="UniPathway" id="UPA00588">
    <property type="reaction ID" value="UER00649"/>
</dbReference>
<dbReference type="Proteomes" id="UP000007096">
    <property type="component" value="Chromosome"/>
</dbReference>
<dbReference type="GO" id="GO:0005737">
    <property type="term" value="C:cytoplasm"/>
    <property type="evidence" value="ECO:0007669"/>
    <property type="project" value="UniProtKB-SubCell"/>
</dbReference>
<dbReference type="GO" id="GO:0004017">
    <property type="term" value="F:adenylate kinase activity"/>
    <property type="evidence" value="ECO:0007669"/>
    <property type="project" value="UniProtKB-UniRule"/>
</dbReference>
<dbReference type="GO" id="GO:0005524">
    <property type="term" value="F:ATP binding"/>
    <property type="evidence" value="ECO:0007669"/>
    <property type="project" value="UniProtKB-UniRule"/>
</dbReference>
<dbReference type="GO" id="GO:0008270">
    <property type="term" value="F:zinc ion binding"/>
    <property type="evidence" value="ECO:0007669"/>
    <property type="project" value="UniProtKB-UniRule"/>
</dbReference>
<dbReference type="GO" id="GO:0044209">
    <property type="term" value="P:AMP salvage"/>
    <property type="evidence" value="ECO:0007669"/>
    <property type="project" value="UniProtKB-UniRule"/>
</dbReference>
<dbReference type="CDD" id="cd01428">
    <property type="entry name" value="ADK"/>
    <property type="match status" value="1"/>
</dbReference>
<dbReference type="FunFam" id="3.40.50.300:FF:000106">
    <property type="entry name" value="Adenylate kinase mitochondrial"/>
    <property type="match status" value="1"/>
</dbReference>
<dbReference type="Gene3D" id="3.40.50.300">
    <property type="entry name" value="P-loop containing nucleotide triphosphate hydrolases"/>
    <property type="match status" value="1"/>
</dbReference>
<dbReference type="HAMAP" id="MF_00235">
    <property type="entry name" value="Adenylate_kinase_Adk"/>
    <property type="match status" value="1"/>
</dbReference>
<dbReference type="InterPro" id="IPR006259">
    <property type="entry name" value="Adenyl_kin_sub"/>
</dbReference>
<dbReference type="InterPro" id="IPR000850">
    <property type="entry name" value="Adenylat/UMP-CMP_kin"/>
</dbReference>
<dbReference type="InterPro" id="IPR033690">
    <property type="entry name" value="Adenylat_kinase_CS"/>
</dbReference>
<dbReference type="InterPro" id="IPR007862">
    <property type="entry name" value="Adenylate_kinase_lid-dom"/>
</dbReference>
<dbReference type="InterPro" id="IPR027417">
    <property type="entry name" value="P-loop_NTPase"/>
</dbReference>
<dbReference type="NCBIfam" id="TIGR01351">
    <property type="entry name" value="adk"/>
    <property type="match status" value="1"/>
</dbReference>
<dbReference type="NCBIfam" id="NF001380">
    <property type="entry name" value="PRK00279.1-2"/>
    <property type="match status" value="1"/>
</dbReference>
<dbReference type="NCBIfam" id="NF001381">
    <property type="entry name" value="PRK00279.1-3"/>
    <property type="match status" value="1"/>
</dbReference>
<dbReference type="NCBIfam" id="NF011100">
    <property type="entry name" value="PRK14527.1"/>
    <property type="match status" value="1"/>
</dbReference>
<dbReference type="PANTHER" id="PTHR23359">
    <property type="entry name" value="NUCLEOTIDE KINASE"/>
    <property type="match status" value="1"/>
</dbReference>
<dbReference type="Pfam" id="PF00406">
    <property type="entry name" value="ADK"/>
    <property type="match status" value="1"/>
</dbReference>
<dbReference type="Pfam" id="PF05191">
    <property type="entry name" value="ADK_lid"/>
    <property type="match status" value="1"/>
</dbReference>
<dbReference type="PRINTS" id="PR00094">
    <property type="entry name" value="ADENYLTKNASE"/>
</dbReference>
<dbReference type="SUPFAM" id="SSF52540">
    <property type="entry name" value="P-loop containing nucleoside triphosphate hydrolases"/>
    <property type="match status" value="1"/>
</dbReference>
<dbReference type="PROSITE" id="PS00113">
    <property type="entry name" value="ADENYLATE_KINASE"/>
    <property type="match status" value="1"/>
</dbReference>
<feature type="chain" id="PRO_1000118984" description="Adenylate kinase">
    <location>
        <begin position="1"/>
        <end position="216"/>
    </location>
</feature>
<feature type="region of interest" description="NMP" evidence="1">
    <location>
        <begin position="30"/>
        <end position="59"/>
    </location>
</feature>
<feature type="region of interest" description="LID" evidence="1">
    <location>
        <begin position="126"/>
        <end position="163"/>
    </location>
</feature>
<feature type="binding site" evidence="1">
    <location>
        <begin position="10"/>
        <end position="15"/>
    </location>
    <ligand>
        <name>ATP</name>
        <dbReference type="ChEBI" id="CHEBI:30616"/>
    </ligand>
</feature>
<feature type="binding site" evidence="1">
    <location>
        <position position="31"/>
    </location>
    <ligand>
        <name>AMP</name>
        <dbReference type="ChEBI" id="CHEBI:456215"/>
    </ligand>
</feature>
<feature type="binding site" evidence="1">
    <location>
        <position position="36"/>
    </location>
    <ligand>
        <name>AMP</name>
        <dbReference type="ChEBI" id="CHEBI:456215"/>
    </ligand>
</feature>
<feature type="binding site" evidence="1">
    <location>
        <begin position="57"/>
        <end position="59"/>
    </location>
    <ligand>
        <name>AMP</name>
        <dbReference type="ChEBI" id="CHEBI:456215"/>
    </ligand>
</feature>
<feature type="binding site" evidence="1">
    <location>
        <begin position="85"/>
        <end position="88"/>
    </location>
    <ligand>
        <name>AMP</name>
        <dbReference type="ChEBI" id="CHEBI:456215"/>
    </ligand>
</feature>
<feature type="binding site" evidence="1">
    <location>
        <position position="92"/>
    </location>
    <ligand>
        <name>AMP</name>
        <dbReference type="ChEBI" id="CHEBI:456215"/>
    </ligand>
</feature>
<feature type="binding site" evidence="1">
    <location>
        <position position="127"/>
    </location>
    <ligand>
        <name>ATP</name>
        <dbReference type="ChEBI" id="CHEBI:30616"/>
    </ligand>
</feature>
<feature type="binding site" evidence="1">
    <location>
        <position position="130"/>
    </location>
    <ligand>
        <name>Zn(2+)</name>
        <dbReference type="ChEBI" id="CHEBI:29105"/>
        <note>structural</note>
    </ligand>
</feature>
<feature type="binding site" evidence="1">
    <location>
        <position position="133"/>
    </location>
    <ligand>
        <name>Zn(2+)</name>
        <dbReference type="ChEBI" id="CHEBI:29105"/>
        <note>structural</note>
    </ligand>
</feature>
<feature type="binding site" evidence="1">
    <location>
        <begin position="136"/>
        <end position="137"/>
    </location>
    <ligand>
        <name>ATP</name>
        <dbReference type="ChEBI" id="CHEBI:30616"/>
    </ligand>
</feature>
<feature type="binding site" evidence="1">
    <location>
        <position position="150"/>
    </location>
    <ligand>
        <name>Zn(2+)</name>
        <dbReference type="ChEBI" id="CHEBI:29105"/>
        <note>structural</note>
    </ligand>
</feature>
<feature type="binding site" evidence="1">
    <location>
        <position position="153"/>
    </location>
    <ligand>
        <name>Zn(2+)</name>
        <dbReference type="ChEBI" id="CHEBI:29105"/>
        <note>structural</note>
    </ligand>
</feature>
<feature type="binding site" evidence="1">
    <location>
        <position position="160"/>
    </location>
    <ligand>
        <name>AMP</name>
        <dbReference type="ChEBI" id="CHEBI:456215"/>
    </ligand>
</feature>
<feature type="binding site" evidence="1">
    <location>
        <position position="171"/>
    </location>
    <ligand>
        <name>AMP</name>
        <dbReference type="ChEBI" id="CHEBI:456215"/>
    </ligand>
</feature>
<feature type="binding site" evidence="1">
    <location>
        <position position="199"/>
    </location>
    <ligand>
        <name>ATP</name>
        <dbReference type="ChEBI" id="CHEBI:30616"/>
    </ligand>
</feature>
<name>KAD_BACC4</name>
<protein>
    <recommendedName>
        <fullName evidence="1">Adenylate kinase</fullName>
        <shortName evidence="1">AK</shortName>
        <ecNumber evidence="1">2.7.4.3</ecNumber>
    </recommendedName>
    <alternativeName>
        <fullName evidence="1">ATP-AMP transphosphorylase</fullName>
    </alternativeName>
    <alternativeName>
        <fullName evidence="1">ATP:AMP phosphotransferase</fullName>
    </alternativeName>
    <alternativeName>
        <fullName evidence="1">Adenylate monophosphate kinase</fullName>
    </alternativeName>
</protein>
<comment type="function">
    <text evidence="1">Catalyzes the reversible transfer of the terminal phosphate group between ATP and AMP. Plays an important role in cellular energy homeostasis and in adenine nucleotide metabolism.</text>
</comment>
<comment type="catalytic activity">
    <reaction evidence="1">
        <text>AMP + ATP = 2 ADP</text>
        <dbReference type="Rhea" id="RHEA:12973"/>
        <dbReference type="ChEBI" id="CHEBI:30616"/>
        <dbReference type="ChEBI" id="CHEBI:456215"/>
        <dbReference type="ChEBI" id="CHEBI:456216"/>
        <dbReference type="EC" id="2.7.4.3"/>
    </reaction>
</comment>
<comment type="pathway">
    <text evidence="1">Purine metabolism; AMP biosynthesis via salvage pathway; AMP from ADP: step 1/1.</text>
</comment>
<comment type="subunit">
    <text evidence="1">Monomer.</text>
</comment>
<comment type="subcellular location">
    <subcellularLocation>
        <location evidence="1">Cytoplasm</location>
    </subcellularLocation>
</comment>
<comment type="domain">
    <text evidence="1">Consists of three domains, a large central CORE domain and two small peripheral domains, NMPbind and LID, which undergo movements during catalysis. The LID domain closes over the site of phosphoryl transfer upon ATP binding. Assembling and dissambling the active center during each catalytic cycle provides an effective means to prevent ATP hydrolysis. Some bacteria have evolved a zinc-coordinating structure that stabilizes the LID domain.</text>
</comment>
<comment type="similarity">
    <text evidence="1">Belongs to the adenylate kinase family.</text>
</comment>
<reference key="1">
    <citation type="submission" date="2008-10" db="EMBL/GenBank/DDBJ databases">
        <title>Genome sequence of Bacillus cereus B4264.</title>
        <authorList>
            <person name="Dodson R.J."/>
            <person name="Durkin A.S."/>
            <person name="Rosovitz M.J."/>
            <person name="Rasko D.A."/>
            <person name="Hoffmaster A."/>
            <person name="Ravel J."/>
            <person name="Sutton G."/>
        </authorList>
    </citation>
    <scope>NUCLEOTIDE SEQUENCE [LARGE SCALE GENOMIC DNA]</scope>
    <source>
        <strain>B4264</strain>
    </source>
</reference>
<accession>B7HJ69</accession>
<gene>
    <name evidence="1" type="primary">adk</name>
    <name type="ordered locus">BCB4264_A0152</name>
</gene>